<sequence length="2443" mass="267873">MVSAIEPIAIVGTGCRFPGNCSSSARLWELLRSPQNVASKVPADRFNVDAFYHPDGTHHGTTNVKEGYFLKEDVRAFDASFFNISPTEAASMDPQQRLLLETVYESLESAGLQMEALQGSSTGVFCGFLRNDYSQIQTTDRDALPAYMVTGNSPSIMANRVSYFFDWKGPSFGMDTGCSSSLLAVHLAVEALHRGDCSMAMAVGSNLILSPTPFIADSATGMLSPTGRSRMWDESADGYARGEGVAAVVLKRLSDALADGDEIECLIRATAANADGRTMGITMPNGNAQQELIHNTYTKAGLDPKNSEGRCQYFEAHGTGTQAGDPQEAGAIFNAFFGDSPTTDLKAEEKLYVGSIKTVIGHTEATAGLAGLIKASLCLQHSEIVPNMLLERLNPKLSSFMSCLHVPTENMPWPKLPAGAPRRASVNSFGFGGANVHAILESYDAPATSPPTHSLPFILPFTFSAASERSLGAVLQQHGRYLQDAKEEHLLDLAATLGNRRSVFSHRVNLTASSLEDLRSKVQHEIEQNTTEYSSTVICRSKARSHSVLGVFTGQGAQWPQMGLDLIMACPEARMWIDEMQESLNRLPAEYRPNFVMMDELSKPKDKSRVHEAAISQPLRTAIQIIQVNFLRALGISFTAVVGHSSGEVAAAYAAGLLNSSDAIRIAYLRGNVAKYAGSTGQQGAMMAVGLSGGDADAICSQESYVGRVSVAAYNSPSSVTLSGDQDVLTELEWLLRSLGRQVKVLRVDTAYHSHHMLPCAEPYLKALKKCNISIQRPQTSRWFSSVFNGREMMSDDDSLQGEYWKENMVHSVEFSQAMAMAVDQISGPDLIMEVGPHPALKGPAIETLSTIQTDTQIPYIGLTKRDSSSIECFAAAIGSLWTYLESGCMDLPKYVSLFDPAYHLKFVKDLPSYPFDHREQFWAESRLSKAVSHRSNPPNCLLGVLSPDSGKEEQVWRGYLRRDSLQWLIGYEIRSLPLFPPSGYISLALESAKLIAGQEQLQLLEVQDLAIENDLPIADNTTGVEIVFKVGSLRTNGKHIHGTFNCQAGVSGKLISCASGVLTMTLGSADAAALPARRSSLPDMRAVDIEDFYSALTRLGHLYSEDFKCLKALSRRRDGACGSALNSIERKPGSPLLHPATAETSFQVLMAALENPSNSQSSILYRPTLIRRTVINLALCDSPELMLDASILHVEPEGIHGVVDVFNSTGQGVMQLEGVHLVPLLEDLADVHSATLFSETVWGPVKLDATLGASDCAPNVASSLELRERLTFLHLRNIGDQLSLKARQNLDKPRAFFVAWMDHVLAAVRDNDHPTCRSEWLGENLQHFLSIDHGLHQSELLAMDKICRSISARLLCMGDTQEDVFVNEALAEYYQTSREFSSLCDRLVKVVGQILFLFPRLNVLEVRRGTDLVTKRLLREFGHAFHSYTCTDTSDVPPARKESQNAQSKRLISYTSLDLCDDIVVQGYQEHSQDLVVITNSGHGSCSLPVTISNMRRLLKPGGYIVIIETTNPTLVYPKFFSGTPQNWKESVRTRSEWNTLLLSGGFSGIDTANPAHEAAILNMSLFVSQAVDDQIQLLRSPLSMCSAVANQDLFFVCETNDDMEPLRNSLYGLLKPRFNHIVSAENLDAMEFEGFCAPTVLVLTYKNDSWFQTITNEQCRASIQKTFKAAGKLLWVTVDAQVDPYRAMTNGMLRSISLEYPSVTFQHLEIPNPNAVSFKILATALMRLVHTKFENNCRLSGVVTATEPEVRYVDGAFLVPRQQTSSFPNKRYLAHTHVVDGDVGIEHILIEPTKPERLDSPVRVVAHSTTSSYSPQSPRVTLRVQYSTLRAVRVDTAGYLYLVVGRDVQSQSRFLAVTDKNAGLISIDVLRTRPIPSWIPEGQEDDLLLFITCALIAEQILSEVHPGTSLLVHEPDSALYQALATAAPLHMIEVFFSTSKSPPANGMMFIHKNVSSLALSRQLPSDLSVIAASASSSGTLFRRATSLLRKDIRQVDIDNFFRASPQTRQVQVSDLRGIAHALKQTRALHDTRASVTEVDAISGHPGALDNLEIVDWTASKPIPAQIRSASSHVSLSAAKSYLLLAMQKDLAVSVSEWMVARGARHVVLAGTASDINVDKGWVEEMASRGACIHCLPTDISERQSVLLLERFTCALPPAGGIIYGALARLPADNLFPMARQNRDVSPITSLLESSILLDELYNHPAMDFFIFVGSLSGQFNHANMVECAAASEFSSALIRRRRSRSFSGSIVFMSQIPDPKSESKFLGEKYLSEHDLDEVFAESILAGDPNSTGNHEITAGLRPIKPEHTEMSWNRIPKMWNFVQHLAEFNSVSPSHSEVITMSVLLERATSQREVTEILTSHLLTQLRTKLGLSTEAVLVPETQLSELGVDSLVAADLRTWFLKELSVDVPILFMLSGSSIQEITSSAAAKLDASRIPHAQ</sequence>
<keyword id="KW-0489">Methyltransferase</keyword>
<keyword id="KW-0511">Multifunctional enzyme</keyword>
<keyword id="KW-0596">Phosphopantetheine</keyword>
<keyword id="KW-0597">Phosphoprotein</keyword>
<keyword id="KW-0808">Transferase</keyword>
<gene>
    <name evidence="8" type="primary">olcA</name>
</gene>
<evidence type="ECO:0000250" key="1">
    <source>
        <dbReference type="UniProtKB" id="Q5B0D0"/>
    </source>
</evidence>
<evidence type="ECO:0000255" key="2"/>
<evidence type="ECO:0000255" key="3">
    <source>
        <dbReference type="PROSITE-ProRule" id="PRU00258"/>
    </source>
</evidence>
<evidence type="ECO:0000255" key="4">
    <source>
        <dbReference type="PROSITE-ProRule" id="PRU01348"/>
    </source>
</evidence>
<evidence type="ECO:0000255" key="5">
    <source>
        <dbReference type="PROSITE-ProRule" id="PRU01363"/>
    </source>
</evidence>
<evidence type="ECO:0000255" key="6">
    <source>
        <dbReference type="PROSITE-ProRule" id="PRU10022"/>
    </source>
</evidence>
<evidence type="ECO:0000269" key="7">
    <source>
    </source>
</evidence>
<evidence type="ECO:0000303" key="8">
    <source>
    </source>
</evidence>
<evidence type="ECO:0000305" key="9">
    <source>
    </source>
</evidence>
<feature type="chain" id="PRO_0000453885" description="Non-reducing polyketide synthase olcA">
    <location>
        <begin position="1"/>
        <end position="2443"/>
    </location>
</feature>
<feature type="domain" description="Ketosynthase family 3 (KS3)" evidence="4">
    <location>
        <begin position="5"/>
        <end position="442"/>
    </location>
</feature>
<feature type="domain" description="PKS/mFAS DH" evidence="5">
    <location>
        <begin position="940"/>
        <end position="1231"/>
    </location>
</feature>
<feature type="domain" description="Carrier" evidence="3">
    <location>
        <begin position="2359"/>
        <end position="2434"/>
    </location>
</feature>
<feature type="region of interest" description="Malonyl-CoA:ACP transacylase (MAT) domain" evidence="2">
    <location>
        <begin position="550"/>
        <end position="885"/>
    </location>
</feature>
<feature type="region of interest" description="N-terminal hotdog fold" evidence="5">
    <location>
        <begin position="940"/>
        <end position="1070"/>
    </location>
</feature>
<feature type="region of interest" description="Product template (PT) domain" evidence="2">
    <location>
        <begin position="989"/>
        <end position="1497"/>
    </location>
</feature>
<feature type="region of interest" description="C-terminal hotdog fold" evidence="5">
    <location>
        <begin position="1085"/>
        <end position="1231"/>
    </location>
</feature>
<feature type="region of interest" description="Methyltransferase (CMeT) domain" evidence="2">
    <location>
        <begin position="1771"/>
        <end position="2159"/>
    </location>
</feature>
<feature type="active site" description="For beta-ketoacyl synthase activity" evidence="4">
    <location>
        <position position="178"/>
    </location>
</feature>
<feature type="active site" description="For beta-ketoacyl synthase activity" evidence="4">
    <location>
        <position position="317"/>
    </location>
</feature>
<feature type="active site" description="For beta-ketoacyl synthase activity" evidence="4">
    <location>
        <position position="362"/>
    </location>
</feature>
<feature type="active site" description="For acyl/malonyl transferase activity" evidence="6">
    <location>
        <position position="645"/>
    </location>
</feature>
<feature type="modified residue" description="O-(pantetheine 4'-phosphoryl)serine" evidence="3">
    <location>
        <position position="2394"/>
    </location>
</feature>
<accession>P9WEQ0</accession>
<organism>
    <name type="scientific">Penicillium canescens</name>
    <dbReference type="NCBI Taxonomy" id="5083"/>
    <lineage>
        <taxon>Eukaryota</taxon>
        <taxon>Fungi</taxon>
        <taxon>Dikarya</taxon>
        <taxon>Ascomycota</taxon>
        <taxon>Pezizomycotina</taxon>
        <taxon>Eurotiomycetes</taxon>
        <taxon>Eurotiomycetidae</taxon>
        <taxon>Eurotiales</taxon>
        <taxon>Aspergillaceae</taxon>
        <taxon>Penicillium</taxon>
    </lineage>
</organism>
<protein>
    <recommendedName>
        <fullName evidence="8">Non-reducing polyketide synthase olcA</fullName>
        <ecNumber evidence="7">2.3.1.-</ecNumber>
    </recommendedName>
    <alternativeName>
        <fullName evidence="8">15-deoxyoxalicine B biosynthesis cluster protein A</fullName>
    </alternativeName>
</protein>
<dbReference type="EC" id="2.3.1.-" evidence="7"/>
<dbReference type="SMR" id="P9WEQ0"/>
<dbReference type="UniPathway" id="UPA00213"/>
<dbReference type="GO" id="GO:0004315">
    <property type="term" value="F:3-oxoacyl-[acyl-carrier-protein] synthase activity"/>
    <property type="evidence" value="ECO:0007669"/>
    <property type="project" value="InterPro"/>
</dbReference>
<dbReference type="GO" id="GO:0004312">
    <property type="term" value="F:fatty acid synthase activity"/>
    <property type="evidence" value="ECO:0007669"/>
    <property type="project" value="TreeGrafter"/>
</dbReference>
<dbReference type="GO" id="GO:0008168">
    <property type="term" value="F:methyltransferase activity"/>
    <property type="evidence" value="ECO:0007669"/>
    <property type="project" value="UniProtKB-KW"/>
</dbReference>
<dbReference type="GO" id="GO:0031177">
    <property type="term" value="F:phosphopantetheine binding"/>
    <property type="evidence" value="ECO:0007669"/>
    <property type="project" value="InterPro"/>
</dbReference>
<dbReference type="GO" id="GO:0006633">
    <property type="term" value="P:fatty acid biosynthetic process"/>
    <property type="evidence" value="ECO:0007669"/>
    <property type="project" value="InterPro"/>
</dbReference>
<dbReference type="GO" id="GO:1901336">
    <property type="term" value="P:lactone biosynthetic process"/>
    <property type="evidence" value="ECO:0007669"/>
    <property type="project" value="UniProtKB-ARBA"/>
</dbReference>
<dbReference type="GO" id="GO:0032259">
    <property type="term" value="P:methylation"/>
    <property type="evidence" value="ECO:0007669"/>
    <property type="project" value="UniProtKB-KW"/>
</dbReference>
<dbReference type="GO" id="GO:0030639">
    <property type="term" value="P:polyketide biosynthetic process"/>
    <property type="evidence" value="ECO:0007669"/>
    <property type="project" value="UniProtKB-ARBA"/>
</dbReference>
<dbReference type="GO" id="GO:0016114">
    <property type="term" value="P:terpenoid biosynthetic process"/>
    <property type="evidence" value="ECO:0007669"/>
    <property type="project" value="UniProtKB-UniPathway"/>
</dbReference>
<dbReference type="CDD" id="cd00833">
    <property type="entry name" value="PKS"/>
    <property type="match status" value="1"/>
</dbReference>
<dbReference type="FunFam" id="3.40.47.10:FF:000019">
    <property type="entry name" value="Polyketide synthase type I"/>
    <property type="match status" value="1"/>
</dbReference>
<dbReference type="Gene3D" id="3.40.47.10">
    <property type="match status" value="1"/>
</dbReference>
<dbReference type="Gene3D" id="1.10.1200.10">
    <property type="entry name" value="ACP-like"/>
    <property type="match status" value="1"/>
</dbReference>
<dbReference type="Gene3D" id="3.40.366.10">
    <property type="entry name" value="Malonyl-Coenzyme A Acyl Carrier Protein, domain 2"/>
    <property type="match status" value="1"/>
</dbReference>
<dbReference type="Gene3D" id="3.40.50.720">
    <property type="entry name" value="NAD(P)-binding Rossmann-like Domain"/>
    <property type="match status" value="2"/>
</dbReference>
<dbReference type="Gene3D" id="3.10.129.110">
    <property type="entry name" value="Polyketide synthase dehydratase"/>
    <property type="match status" value="1"/>
</dbReference>
<dbReference type="Gene3D" id="3.40.50.150">
    <property type="entry name" value="Vaccinia Virus protein VP39"/>
    <property type="match status" value="1"/>
</dbReference>
<dbReference type="InterPro" id="IPR001227">
    <property type="entry name" value="Ac_transferase_dom_sf"/>
</dbReference>
<dbReference type="InterPro" id="IPR036736">
    <property type="entry name" value="ACP-like_sf"/>
</dbReference>
<dbReference type="InterPro" id="IPR014043">
    <property type="entry name" value="Acyl_transferase_dom"/>
</dbReference>
<dbReference type="InterPro" id="IPR016035">
    <property type="entry name" value="Acyl_Trfase/lysoPLipase"/>
</dbReference>
<dbReference type="InterPro" id="IPR018201">
    <property type="entry name" value="Ketoacyl_synth_AS"/>
</dbReference>
<dbReference type="InterPro" id="IPR014031">
    <property type="entry name" value="Ketoacyl_synth_C"/>
</dbReference>
<dbReference type="InterPro" id="IPR014030">
    <property type="entry name" value="Ketoacyl_synth_N"/>
</dbReference>
<dbReference type="InterPro" id="IPR016036">
    <property type="entry name" value="Malonyl_transacylase_ACP-bd"/>
</dbReference>
<dbReference type="InterPro" id="IPR032821">
    <property type="entry name" value="PKS_assoc"/>
</dbReference>
<dbReference type="InterPro" id="IPR020841">
    <property type="entry name" value="PKS_Beta-ketoAc_synthase_dom"/>
</dbReference>
<dbReference type="InterPro" id="IPR042104">
    <property type="entry name" value="PKS_dehydratase_sf"/>
</dbReference>
<dbReference type="InterPro" id="IPR020807">
    <property type="entry name" value="PKS_DH"/>
</dbReference>
<dbReference type="InterPro" id="IPR049551">
    <property type="entry name" value="PKS_DH_C"/>
</dbReference>
<dbReference type="InterPro" id="IPR049552">
    <property type="entry name" value="PKS_DH_N"/>
</dbReference>
<dbReference type="InterPro" id="IPR013968">
    <property type="entry name" value="PKS_KR"/>
</dbReference>
<dbReference type="InterPro" id="IPR049900">
    <property type="entry name" value="PKS_mFAS_DH"/>
</dbReference>
<dbReference type="InterPro" id="IPR050091">
    <property type="entry name" value="PKS_NRPS_Biosynth_Enz"/>
</dbReference>
<dbReference type="InterPro" id="IPR020806">
    <property type="entry name" value="PKS_PP-bd"/>
</dbReference>
<dbReference type="InterPro" id="IPR009081">
    <property type="entry name" value="PP-bd_ACP"/>
</dbReference>
<dbReference type="InterPro" id="IPR006162">
    <property type="entry name" value="Ppantetheine_attach_site"/>
</dbReference>
<dbReference type="InterPro" id="IPR029063">
    <property type="entry name" value="SAM-dependent_MTases_sf"/>
</dbReference>
<dbReference type="InterPro" id="IPR016039">
    <property type="entry name" value="Thiolase-like"/>
</dbReference>
<dbReference type="PANTHER" id="PTHR43775">
    <property type="entry name" value="FATTY ACID SYNTHASE"/>
    <property type="match status" value="1"/>
</dbReference>
<dbReference type="PANTHER" id="PTHR43775:SF48">
    <property type="entry name" value="HIGHLY REDUCING POLYKETIDE SYNTHASE SDGA"/>
    <property type="match status" value="1"/>
</dbReference>
<dbReference type="Pfam" id="PF00698">
    <property type="entry name" value="Acyl_transf_1"/>
    <property type="match status" value="1"/>
</dbReference>
<dbReference type="Pfam" id="PF16197">
    <property type="entry name" value="KAsynt_C_assoc"/>
    <property type="match status" value="1"/>
</dbReference>
<dbReference type="Pfam" id="PF00109">
    <property type="entry name" value="ketoacyl-synt"/>
    <property type="match status" value="1"/>
</dbReference>
<dbReference type="Pfam" id="PF02801">
    <property type="entry name" value="Ketoacyl-synt_C"/>
    <property type="match status" value="1"/>
</dbReference>
<dbReference type="Pfam" id="PF08659">
    <property type="entry name" value="KR"/>
    <property type="match status" value="1"/>
</dbReference>
<dbReference type="Pfam" id="PF21089">
    <property type="entry name" value="PKS_DH_N"/>
    <property type="match status" value="1"/>
</dbReference>
<dbReference type="Pfam" id="PF00550">
    <property type="entry name" value="PP-binding"/>
    <property type="match status" value="1"/>
</dbReference>
<dbReference type="Pfam" id="PF14765">
    <property type="entry name" value="PS-DH"/>
    <property type="match status" value="1"/>
</dbReference>
<dbReference type="SMART" id="SM00827">
    <property type="entry name" value="PKS_AT"/>
    <property type="match status" value="1"/>
</dbReference>
<dbReference type="SMART" id="SM00826">
    <property type="entry name" value="PKS_DH"/>
    <property type="match status" value="1"/>
</dbReference>
<dbReference type="SMART" id="SM00822">
    <property type="entry name" value="PKS_KR"/>
    <property type="match status" value="1"/>
</dbReference>
<dbReference type="SMART" id="SM00825">
    <property type="entry name" value="PKS_KS"/>
    <property type="match status" value="1"/>
</dbReference>
<dbReference type="SMART" id="SM00823">
    <property type="entry name" value="PKS_PP"/>
    <property type="match status" value="1"/>
</dbReference>
<dbReference type="SUPFAM" id="SSF47336">
    <property type="entry name" value="ACP-like"/>
    <property type="match status" value="1"/>
</dbReference>
<dbReference type="SUPFAM" id="SSF52151">
    <property type="entry name" value="FabD/lysophospholipase-like"/>
    <property type="match status" value="1"/>
</dbReference>
<dbReference type="SUPFAM" id="SSF55048">
    <property type="entry name" value="Probable ACP-binding domain of malonyl-CoA ACP transacylase"/>
    <property type="match status" value="1"/>
</dbReference>
<dbReference type="SUPFAM" id="SSF53335">
    <property type="entry name" value="S-adenosyl-L-methionine-dependent methyltransferases"/>
    <property type="match status" value="1"/>
</dbReference>
<dbReference type="SUPFAM" id="SSF53901">
    <property type="entry name" value="Thiolase-like"/>
    <property type="match status" value="1"/>
</dbReference>
<dbReference type="PROSITE" id="PS50075">
    <property type="entry name" value="CARRIER"/>
    <property type="match status" value="1"/>
</dbReference>
<dbReference type="PROSITE" id="PS00606">
    <property type="entry name" value="KS3_1"/>
    <property type="match status" value="1"/>
</dbReference>
<dbReference type="PROSITE" id="PS52004">
    <property type="entry name" value="KS3_2"/>
    <property type="match status" value="1"/>
</dbReference>
<dbReference type="PROSITE" id="PS00012">
    <property type="entry name" value="PHOSPHOPANTETHEINE"/>
    <property type="match status" value="1"/>
</dbReference>
<dbReference type="PROSITE" id="PS52019">
    <property type="entry name" value="PKS_MFAS_DH"/>
    <property type="match status" value="1"/>
</dbReference>
<name>OLCA_PENCN</name>
<comment type="function">
    <text evidence="7 9">Non-reducing polyketide synthase; part of the gene cluster that mediates the biosynthesis of 15-deoxyoxalicine B (PubMed:30090271). The first step of the pathway is the synthesis of nicotinyl-CoA from nicotinic acid by the nicotinic acid-CoA ligase olcI (PubMed:30090271). Nicotinyl-CoA is then a substrate of polyketide synthase olcA to produce 4-hydroxy-6-(3-pyridinyl)-2H-pyran-2-one (HPPO) which is further prenylated by the polyprenyl transferase olcH to yield geranylgeranyl-HPPO (PubMed:30090271). Geranylgeranyl pyrophosphate is provided by the cluster-specific geranylgeranyl pyrophosphate synthase olcC (PubMed:30090271). The FAD-dependent monooxygenase olcE catalyzes the epoxidation of geranylgeranyl-HPPO and the terpene cyclase olcD catalyzes the cyclization of the terpenoid component, resulting in the formation of the tricyclic terpene moiety seen in predecaturin E (PubMed:30090271). The cytochrome P450 monooxygenase then catalyzes the allylic oxidation of predecaturin E, which is followed by spirocylization with concomitant loss of one molecule of water to form decaturin E (PubMed:30090271). Decaturin E is the substrate of the cytochrome P450 monooxygenase olcJ which hydroxylates it at the C-29 position to form decaturin F (PubMed:30090271). The short-chain dehydrogenase/reductase olcF may catalyze the oxidation of decaturin F to generate the 29-hydroxyl-27-one intermediate, and subsequent hemiacetal formation probably leads to the formation of decaturin C (Probable). The dioxygenase olcK may be a peroxisomal enzyme that catalyzes the hydroxylation of decaturin C into decaturin A once decaturin C is shuttled into the peroxisome by the MFS transporter olcL (Probable). Finally the cytochrome P450 monooxygenase olcB catalyzes the oxidative rearrangement to yield 15-deoxyoxalicine B (PubMed:30090271). In the absence of olcJ, decaturin E may be shunted to a pathway in which it is oxidized to a ketone, possibly by olcF, to form decaturin D, which undergoes further allylic oxidation to yield decaturin G (PubMed:30090271). Moreover, in the absence of oclK or oclL, oclB can convert decaturin C into 15-deoxyoxalicine A (PubMed:30090271).</text>
</comment>
<comment type="catalytic activity">
    <reaction evidence="7">
        <text>nicotinyl-CoA + 2 malonyl-CoA + H(+) = 4-hydroxy-6-(pyridin-3-yl)-2H-pyran-2-one + 2 CO2 + 3 CoA</text>
        <dbReference type="Rhea" id="RHEA:64336"/>
        <dbReference type="ChEBI" id="CHEBI:15378"/>
        <dbReference type="ChEBI" id="CHEBI:16526"/>
        <dbReference type="ChEBI" id="CHEBI:57287"/>
        <dbReference type="ChEBI" id="CHEBI:57384"/>
        <dbReference type="ChEBI" id="CHEBI:149703"/>
        <dbReference type="ChEBI" id="CHEBI:149707"/>
    </reaction>
    <physiologicalReaction direction="left-to-right" evidence="7">
        <dbReference type="Rhea" id="RHEA:64337"/>
    </physiologicalReaction>
</comment>
<comment type="pathway">
    <text evidence="7">Secondary metabolite biosynthesis; terpenoid biosynthesis.</text>
</comment>
<comment type="domain">
    <text evidence="1">Multidomain protein; including a starter unit:ACP transacylase (SAT) that selects the starter unit; a ketosynthase (KS) that catalyzes repeated decarboxylative condensation to elongate the polyketide backbone; a malonyl-CoA:ACP transacylase (MAT) that selects and transfers the extender unit malonyl-CoA; a product template (PT) domain that controls the immediate cyclization regioselectivity of the reactive polyketide backbone; and an acyl-carrier protein (ACP) that serves as the tether of the growing and completed polyketide via its phosphopantetheinyl arm.</text>
</comment>
<comment type="disruption phenotype">
    <text evidence="7">Abolishes the production of 15-deoxyoxalicine B.</text>
</comment>
<comment type="miscellaneous">
    <text evidence="7">The 15-deoxyoxalicine B cluster is a rare cluster that contains its own geranylgeranyl pyrophosphate synthase (olcC), in contrast to other related clusters which rely on a FPP/GGPP synthase localized outside of the cluster.</text>
</comment>
<proteinExistence type="inferred from homology"/>
<reference key="1">
    <citation type="journal article" date="2015" name="Chem. Sci.">
        <title>Genome mining and molecular characterization of the biosynthetic gene cluster of a diterpenic meroterpenoid, 15-deoxyoxalicine B, in Penicillium canescens.</title>
        <authorList>
            <person name="Yaegashi J."/>
            <person name="Romsdahl J."/>
            <person name="Chiang Y.M."/>
            <person name="Wang C.C.C."/>
        </authorList>
    </citation>
    <scope>FUNCTION</scope>
    <scope>DISRUPTION PHENOTYPE</scope>
    <scope>PATHWAY</scope>
</reference>
<reference key="2">
    <citation type="journal article" date="2016" name="Chem. Sci.">
        <title>Correction: Genome mining and molecular characterization of the biosynthetic gene cluster of a diterpenic meroterpenoid, 15-deoxyoxalicine B, in Penicillium canescens.</title>
        <authorList>
            <person name="Yaegashi J."/>
            <person name="Romsdahl J."/>
            <person name="Chiang Y.M."/>
            <person name="Wang C.C.C."/>
        </authorList>
    </citation>
    <scope>ERRATUM OF PUBMED:30090271</scope>
</reference>